<feature type="chain" id="PRO_0000390104" description="NADH-quinone oxidoreductase subunit K">
    <location>
        <begin position="1"/>
        <end position="101"/>
    </location>
</feature>
<feature type="transmembrane region" description="Helical" evidence="1">
    <location>
        <begin position="4"/>
        <end position="24"/>
    </location>
</feature>
<feature type="transmembrane region" description="Helical" evidence="1">
    <location>
        <begin position="29"/>
        <end position="49"/>
    </location>
</feature>
<feature type="transmembrane region" description="Helical" evidence="1">
    <location>
        <begin position="61"/>
        <end position="81"/>
    </location>
</feature>
<dbReference type="EC" id="7.1.1.-" evidence="1"/>
<dbReference type="EMBL" id="CR628337">
    <property type="protein sequence ID" value="CAH16936.1"/>
    <property type="molecule type" value="Genomic_DNA"/>
</dbReference>
<dbReference type="RefSeq" id="WP_010948468.1">
    <property type="nucleotide sequence ID" value="NC_006369.1"/>
</dbReference>
<dbReference type="SMR" id="Q5WT30"/>
<dbReference type="GeneID" id="57036777"/>
<dbReference type="KEGG" id="lpf:lpl2695"/>
<dbReference type="LegioList" id="lpl2695"/>
<dbReference type="HOGENOM" id="CLU_144724_2_0_6"/>
<dbReference type="Proteomes" id="UP000002517">
    <property type="component" value="Chromosome"/>
</dbReference>
<dbReference type="GO" id="GO:0030964">
    <property type="term" value="C:NADH dehydrogenase complex"/>
    <property type="evidence" value="ECO:0007669"/>
    <property type="project" value="TreeGrafter"/>
</dbReference>
<dbReference type="GO" id="GO:0005886">
    <property type="term" value="C:plasma membrane"/>
    <property type="evidence" value="ECO:0007669"/>
    <property type="project" value="UniProtKB-SubCell"/>
</dbReference>
<dbReference type="GO" id="GO:0050136">
    <property type="term" value="F:NADH:ubiquinone reductase (non-electrogenic) activity"/>
    <property type="evidence" value="ECO:0007669"/>
    <property type="project" value="UniProtKB-UniRule"/>
</dbReference>
<dbReference type="GO" id="GO:0048038">
    <property type="term" value="F:quinone binding"/>
    <property type="evidence" value="ECO:0007669"/>
    <property type="project" value="UniProtKB-KW"/>
</dbReference>
<dbReference type="GO" id="GO:0042773">
    <property type="term" value="P:ATP synthesis coupled electron transport"/>
    <property type="evidence" value="ECO:0007669"/>
    <property type="project" value="InterPro"/>
</dbReference>
<dbReference type="FunFam" id="1.10.287.3510:FF:000001">
    <property type="entry name" value="NADH-quinone oxidoreductase subunit K"/>
    <property type="match status" value="1"/>
</dbReference>
<dbReference type="Gene3D" id="1.10.287.3510">
    <property type="match status" value="1"/>
</dbReference>
<dbReference type="HAMAP" id="MF_01456">
    <property type="entry name" value="NDH1_NuoK"/>
    <property type="match status" value="1"/>
</dbReference>
<dbReference type="InterPro" id="IPR001133">
    <property type="entry name" value="NADH_UbQ_OxRdtase_chain4L/K"/>
</dbReference>
<dbReference type="InterPro" id="IPR039428">
    <property type="entry name" value="NUOK/Mnh_C1-like"/>
</dbReference>
<dbReference type="NCBIfam" id="NF004320">
    <property type="entry name" value="PRK05715.1-2"/>
    <property type="match status" value="1"/>
</dbReference>
<dbReference type="NCBIfam" id="NF004321">
    <property type="entry name" value="PRK05715.1-3"/>
    <property type="match status" value="1"/>
</dbReference>
<dbReference type="NCBIfam" id="NF004323">
    <property type="entry name" value="PRK05715.1-5"/>
    <property type="match status" value="1"/>
</dbReference>
<dbReference type="PANTHER" id="PTHR11434:SF21">
    <property type="entry name" value="NADH DEHYDROGENASE SUBUNIT 4L-RELATED"/>
    <property type="match status" value="1"/>
</dbReference>
<dbReference type="PANTHER" id="PTHR11434">
    <property type="entry name" value="NADH-UBIQUINONE OXIDOREDUCTASE SUBUNIT ND4L"/>
    <property type="match status" value="1"/>
</dbReference>
<dbReference type="Pfam" id="PF00420">
    <property type="entry name" value="Oxidored_q2"/>
    <property type="match status" value="1"/>
</dbReference>
<name>NUOK_LEGPL</name>
<accession>Q5WT30</accession>
<keyword id="KW-0997">Cell inner membrane</keyword>
<keyword id="KW-1003">Cell membrane</keyword>
<keyword id="KW-0472">Membrane</keyword>
<keyword id="KW-0520">NAD</keyword>
<keyword id="KW-0874">Quinone</keyword>
<keyword id="KW-1278">Translocase</keyword>
<keyword id="KW-0812">Transmembrane</keyword>
<keyword id="KW-1133">Transmembrane helix</keyword>
<keyword id="KW-0813">Transport</keyword>
<keyword id="KW-0830">Ubiquinone</keyword>
<gene>
    <name evidence="1" type="primary">nuoK</name>
    <name type="ordered locus">lpl2695</name>
</gene>
<evidence type="ECO:0000255" key="1">
    <source>
        <dbReference type="HAMAP-Rule" id="MF_01456"/>
    </source>
</evidence>
<comment type="function">
    <text evidence="1">NDH-1 shuttles electrons from NADH, via FMN and iron-sulfur (Fe-S) centers, to quinones in the respiratory chain. The immediate electron acceptor for the enzyme in this species is believed to be ubiquinone. Couples the redox reaction to proton translocation (for every two electrons transferred, four hydrogen ions are translocated across the cytoplasmic membrane), and thus conserves the redox energy in a proton gradient.</text>
</comment>
<comment type="catalytic activity">
    <reaction evidence="1">
        <text>a quinone + NADH + 5 H(+)(in) = a quinol + NAD(+) + 4 H(+)(out)</text>
        <dbReference type="Rhea" id="RHEA:57888"/>
        <dbReference type="ChEBI" id="CHEBI:15378"/>
        <dbReference type="ChEBI" id="CHEBI:24646"/>
        <dbReference type="ChEBI" id="CHEBI:57540"/>
        <dbReference type="ChEBI" id="CHEBI:57945"/>
        <dbReference type="ChEBI" id="CHEBI:132124"/>
    </reaction>
</comment>
<comment type="subunit">
    <text evidence="1">NDH-1 is composed of 14 different subunits. Subunits NuoA, H, J, K, L, M, N constitute the membrane sector of the complex.</text>
</comment>
<comment type="subcellular location">
    <subcellularLocation>
        <location evidence="1">Cell inner membrane</location>
        <topology evidence="1">Multi-pass membrane protein</topology>
    </subcellularLocation>
</comment>
<comment type="similarity">
    <text evidence="1">Belongs to the complex I subunit 4L family.</text>
</comment>
<sequence>MIPVYDYLVLGVILFGLSLVGIMLNRKNIILLLVCVELMLLAVNTNFIAFSHYYNEVGGQVFVFFILTVAAAEAAIGLAIVMLLYRNRGNIDVDKMNHLKG</sequence>
<organism>
    <name type="scientific">Legionella pneumophila (strain Lens)</name>
    <dbReference type="NCBI Taxonomy" id="297245"/>
    <lineage>
        <taxon>Bacteria</taxon>
        <taxon>Pseudomonadati</taxon>
        <taxon>Pseudomonadota</taxon>
        <taxon>Gammaproteobacteria</taxon>
        <taxon>Legionellales</taxon>
        <taxon>Legionellaceae</taxon>
        <taxon>Legionella</taxon>
    </lineage>
</organism>
<reference key="1">
    <citation type="journal article" date="2004" name="Nat. Genet.">
        <title>Evidence in the Legionella pneumophila genome for exploitation of host cell functions and high genome plasticity.</title>
        <authorList>
            <person name="Cazalet C."/>
            <person name="Rusniok C."/>
            <person name="Brueggemann H."/>
            <person name="Zidane N."/>
            <person name="Magnier A."/>
            <person name="Ma L."/>
            <person name="Tichit M."/>
            <person name="Jarraud S."/>
            <person name="Bouchier C."/>
            <person name="Vandenesch F."/>
            <person name="Kunst F."/>
            <person name="Etienne J."/>
            <person name="Glaser P."/>
            <person name="Buchrieser C."/>
        </authorList>
    </citation>
    <scope>NUCLEOTIDE SEQUENCE [LARGE SCALE GENOMIC DNA]</scope>
    <source>
        <strain>Lens</strain>
    </source>
</reference>
<proteinExistence type="inferred from homology"/>
<protein>
    <recommendedName>
        <fullName evidence="1">NADH-quinone oxidoreductase subunit K</fullName>
        <ecNumber evidence="1">7.1.1.-</ecNumber>
    </recommendedName>
    <alternativeName>
        <fullName evidence="1">NADH dehydrogenase I subunit K</fullName>
    </alternativeName>
    <alternativeName>
        <fullName evidence="1">NDH-1 subunit K</fullName>
    </alternativeName>
</protein>